<sequence length="624" mass="69133">METASRRDHFPNQQLSQTIAQRFAQKSFTPLELYCFNCVFRSLADTESGVHYWSETTLCRFLELPDALGVGSVIFQMASYLGAFPLPSQAPAILTYEALLKVVTILTERYGAVVKKRGREIWLREIYRSLAIYDKGIRSSLEDKEKEKEKDVPAPVSSGNMGFAVDAPDDGDEGDEDEDDELVLAALDSMDAIDAFKHGEQSNVHHSIIPTDNFLKLVELLLLIAPIDAQQSLSTLAPDLSDTRVAELRRAAHVIISSFGVENHPGVTYRTFNAVISTCLPYLFNGLNPLFEHFLFAKDMDLSKRKGGPNSPTKESKPVIPPPKAQSEPILREPGEILNLTILSQLSFFLKGSDLFRRLRPLYSGNTHGFSMGSFEKQVFNWRAPTILLVKGRLLPTTPSTTRERALQDMLPPKRHPSSITPDSLSSNQTLIYGAYISSQWKHTGKTCFGDASTTLFQLSPTHDVFTASAFSHDYTYFSKSPTTPAGLGLGTPIPTQSASHSSHSHSHSHPVFRPGPVSLHLDDALEFAVFTHLAEGGGSFLPSKLPARKGSDWQDRFEIESLEVWGCGGDEVAEEQRRTWAWEEREAEARRRVNLGTGDQEMDRELLKMAGVISGDRSGGSMG</sequence>
<gene>
    <name type="primary">rtc5</name>
    <name type="ORF">PTRG_07478</name>
</gene>
<feature type="chain" id="PRO_0000408842" description="Restriction of telomere capping protein 5">
    <location>
        <begin position="1"/>
        <end position="624"/>
    </location>
</feature>
<feature type="domain" description="TLDc" evidence="2">
    <location>
        <begin position="336"/>
        <end position="569"/>
    </location>
</feature>
<feature type="region of interest" description="Disordered" evidence="3">
    <location>
        <begin position="143"/>
        <end position="177"/>
    </location>
</feature>
<feature type="region of interest" description="Disordered" evidence="3">
    <location>
        <begin position="305"/>
        <end position="328"/>
    </location>
</feature>
<feature type="region of interest" description="Disordered" evidence="3">
    <location>
        <begin position="488"/>
        <end position="512"/>
    </location>
</feature>
<feature type="compositionally biased region" description="Basic and acidic residues" evidence="3">
    <location>
        <begin position="143"/>
        <end position="152"/>
    </location>
</feature>
<feature type="compositionally biased region" description="Acidic residues" evidence="3">
    <location>
        <begin position="167"/>
        <end position="177"/>
    </location>
</feature>
<name>RTC5_PYRTR</name>
<evidence type="ECO:0000250" key="1"/>
<evidence type="ECO:0000255" key="2">
    <source>
        <dbReference type="PROSITE-ProRule" id="PRU01234"/>
    </source>
</evidence>
<evidence type="ECO:0000256" key="3">
    <source>
        <dbReference type="SAM" id="MobiDB-lite"/>
    </source>
</evidence>
<evidence type="ECO:0000305" key="4"/>
<accession>B2WB15</accession>
<keyword id="KW-0963">Cytoplasm</keyword>
<keyword id="KW-1185">Reference proteome</keyword>
<protein>
    <recommendedName>
        <fullName>Restriction of telomere capping protein 5</fullName>
    </recommendedName>
</protein>
<proteinExistence type="inferred from homology"/>
<dbReference type="EMBL" id="DS231621">
    <property type="protein sequence ID" value="EDU50397.1"/>
    <property type="molecule type" value="Genomic_DNA"/>
</dbReference>
<dbReference type="RefSeq" id="XP_001937810.1">
    <property type="nucleotide sequence ID" value="XM_001937775.1"/>
</dbReference>
<dbReference type="SMR" id="B2WB15"/>
<dbReference type="FunCoup" id="B2WB15">
    <property type="interactions" value="6"/>
</dbReference>
<dbReference type="STRING" id="426418.B2WB15"/>
<dbReference type="EnsemblFungi" id="EDU50397">
    <property type="protein sequence ID" value="EDU50397"/>
    <property type="gene ID" value="PTRG_07478"/>
</dbReference>
<dbReference type="eggNOG" id="ENOG502QV3R">
    <property type="taxonomic scope" value="Eukaryota"/>
</dbReference>
<dbReference type="HOGENOM" id="CLU_011918_1_0_1"/>
<dbReference type="InParanoid" id="B2WB15"/>
<dbReference type="OMA" id="KWEFEAR"/>
<dbReference type="OrthoDB" id="18242at28556"/>
<dbReference type="Proteomes" id="UP000001471">
    <property type="component" value="Unassembled WGS sequence"/>
</dbReference>
<dbReference type="GO" id="GO:0005737">
    <property type="term" value="C:cytoplasm"/>
    <property type="evidence" value="ECO:0007669"/>
    <property type="project" value="UniProtKB-SubCell"/>
</dbReference>
<dbReference type="GO" id="GO:0005634">
    <property type="term" value="C:nucleus"/>
    <property type="evidence" value="ECO:0007669"/>
    <property type="project" value="TreeGrafter"/>
</dbReference>
<dbReference type="GO" id="GO:0006979">
    <property type="term" value="P:response to oxidative stress"/>
    <property type="evidence" value="ECO:0007669"/>
    <property type="project" value="TreeGrafter"/>
</dbReference>
<dbReference type="InterPro" id="IPR006571">
    <property type="entry name" value="TLDc_dom"/>
</dbReference>
<dbReference type="PANTHER" id="PTHR23354">
    <property type="entry name" value="NUCLEOLAR PROTEIN 7/ESTROGEN RECEPTOR COACTIVATOR-RELATED"/>
    <property type="match status" value="1"/>
</dbReference>
<dbReference type="PANTHER" id="PTHR23354:SF130">
    <property type="entry name" value="RESTRICTION OF TELOMERE CAPPING PROTEIN 5"/>
    <property type="match status" value="1"/>
</dbReference>
<dbReference type="Pfam" id="PF07534">
    <property type="entry name" value="TLD"/>
    <property type="match status" value="1"/>
</dbReference>
<dbReference type="SMART" id="SM00584">
    <property type="entry name" value="TLDc"/>
    <property type="match status" value="1"/>
</dbReference>
<dbReference type="PROSITE" id="PS51886">
    <property type="entry name" value="TLDC"/>
    <property type="match status" value="1"/>
</dbReference>
<reference key="1">
    <citation type="journal article" date="2013" name="G3 (Bethesda)">
        <title>Comparative genomics of a plant-pathogenic fungus, Pyrenophora tritici-repentis, reveals transduplication and the impact of repeat elements on pathogenicity and population divergence.</title>
        <authorList>
            <person name="Manning V.A."/>
            <person name="Pandelova I."/>
            <person name="Dhillon B."/>
            <person name="Wilhelm L.J."/>
            <person name="Goodwin S.B."/>
            <person name="Berlin A.M."/>
            <person name="Figueroa M."/>
            <person name="Freitag M."/>
            <person name="Hane J.K."/>
            <person name="Henrissat B."/>
            <person name="Holman W.H."/>
            <person name="Kodira C.D."/>
            <person name="Martin J."/>
            <person name="Oliver R.P."/>
            <person name="Robbertse B."/>
            <person name="Schackwitz W."/>
            <person name="Schwartz D.C."/>
            <person name="Spatafora J.W."/>
            <person name="Turgeon B.G."/>
            <person name="Yandava C."/>
            <person name="Young S."/>
            <person name="Zhou S."/>
            <person name="Zeng Q."/>
            <person name="Grigoriev I.V."/>
            <person name="Ma L.-J."/>
            <person name="Ciuffetti L.M."/>
        </authorList>
    </citation>
    <scope>NUCLEOTIDE SEQUENCE [LARGE SCALE GENOMIC DNA]</scope>
    <source>
        <strain>Pt-1C-BFP</strain>
    </source>
</reference>
<organism>
    <name type="scientific">Pyrenophora tritici-repentis (strain Pt-1C-BFP)</name>
    <name type="common">Wheat tan spot fungus</name>
    <name type="synonym">Drechslera tritici-repentis</name>
    <dbReference type="NCBI Taxonomy" id="426418"/>
    <lineage>
        <taxon>Eukaryota</taxon>
        <taxon>Fungi</taxon>
        <taxon>Dikarya</taxon>
        <taxon>Ascomycota</taxon>
        <taxon>Pezizomycotina</taxon>
        <taxon>Dothideomycetes</taxon>
        <taxon>Pleosporomycetidae</taxon>
        <taxon>Pleosporales</taxon>
        <taxon>Pleosporineae</taxon>
        <taxon>Pleosporaceae</taxon>
        <taxon>Pyrenophora</taxon>
    </lineage>
</organism>
<comment type="function">
    <text evidence="1">May be involved in a process influencing telomere capping.</text>
</comment>
<comment type="subcellular location">
    <subcellularLocation>
        <location evidence="1">Cytoplasm</location>
    </subcellularLocation>
</comment>
<comment type="similarity">
    <text evidence="4">Belongs to the RTC5 family.</text>
</comment>